<accession>P13518</accession>
<accession>Q2M8W2</accession>
<organism>
    <name type="scientific">Escherichia coli (strain K12)</name>
    <dbReference type="NCBI Taxonomy" id="83333"/>
    <lineage>
        <taxon>Bacteria</taxon>
        <taxon>Pseudomonadati</taxon>
        <taxon>Pseudomonadota</taxon>
        <taxon>Gammaproteobacteria</taxon>
        <taxon>Enterobacterales</taxon>
        <taxon>Enterobacteriaceae</taxon>
        <taxon>Escherichia</taxon>
    </lineage>
</organism>
<dbReference type="EMBL" id="U18997">
    <property type="protein sequence ID" value="AAA58055.1"/>
    <property type="molecule type" value="Genomic_DNA"/>
</dbReference>
<dbReference type="EMBL" id="U00096">
    <property type="protein sequence ID" value="AAC76284.1"/>
    <property type="molecule type" value="Genomic_DNA"/>
</dbReference>
<dbReference type="EMBL" id="AP009048">
    <property type="protein sequence ID" value="BAE77294.1"/>
    <property type="molecule type" value="Genomic_DNA"/>
</dbReference>
<dbReference type="EMBL" id="M22055">
    <property type="protein sequence ID" value="AAA83890.1"/>
    <property type="molecule type" value="Genomic_DNA"/>
</dbReference>
<dbReference type="PIR" id="F65117">
    <property type="entry name" value="QQECE5"/>
</dbReference>
<dbReference type="RefSeq" id="NP_417718.1">
    <property type="nucleotide sequence ID" value="NC_000913.3"/>
</dbReference>
<dbReference type="RefSeq" id="WP_001241469.1">
    <property type="nucleotide sequence ID" value="NZ_SSZK01000034.1"/>
</dbReference>
<dbReference type="SMR" id="P13518"/>
<dbReference type="BioGRID" id="4261943">
    <property type="interactions" value="11"/>
</dbReference>
<dbReference type="DIP" id="DIP-12292N"/>
<dbReference type="FunCoup" id="P13518">
    <property type="interactions" value="21"/>
</dbReference>
<dbReference type="IntAct" id="P13518">
    <property type="interactions" value="1"/>
</dbReference>
<dbReference type="STRING" id="511145.b3252"/>
<dbReference type="jPOST" id="P13518"/>
<dbReference type="PaxDb" id="511145-b3252"/>
<dbReference type="EnsemblBacteria" id="AAC76284">
    <property type="protein sequence ID" value="AAC76284"/>
    <property type="gene ID" value="b3252"/>
</dbReference>
<dbReference type="GeneID" id="947702"/>
<dbReference type="KEGG" id="ecj:JW3221"/>
<dbReference type="KEGG" id="eco:b3252"/>
<dbReference type="KEGG" id="ecoc:C3026_17685"/>
<dbReference type="PATRIC" id="fig|1411691.4.peg.3477"/>
<dbReference type="EchoBASE" id="EB0018"/>
<dbReference type="eggNOG" id="COG2199">
    <property type="taxonomic scope" value="Bacteria"/>
</dbReference>
<dbReference type="eggNOG" id="COG2200">
    <property type="taxonomic scope" value="Bacteria"/>
</dbReference>
<dbReference type="HOGENOM" id="CLU_028330_0_0_6"/>
<dbReference type="InParanoid" id="P13518"/>
<dbReference type="OMA" id="VCQYIGR"/>
<dbReference type="OrthoDB" id="5894408at2"/>
<dbReference type="PhylomeDB" id="P13518"/>
<dbReference type="BioCyc" id="EcoCyc:EG10018-MONOMER"/>
<dbReference type="PRO" id="PR:P13518"/>
<dbReference type="Proteomes" id="UP000000625">
    <property type="component" value="Chromosome"/>
</dbReference>
<dbReference type="GO" id="GO:0005886">
    <property type="term" value="C:plasma membrane"/>
    <property type="evidence" value="ECO:0000314"/>
    <property type="project" value="EcoCyc"/>
</dbReference>
<dbReference type="GO" id="GO:0032991">
    <property type="term" value="C:protein-containing complex"/>
    <property type="evidence" value="ECO:0000314"/>
    <property type="project" value="EcoCyc"/>
</dbReference>
<dbReference type="GO" id="GO:0071111">
    <property type="term" value="F:cyclic-guanylate-specific phosphodiesterase activity"/>
    <property type="evidence" value="ECO:0000318"/>
    <property type="project" value="GO_Central"/>
</dbReference>
<dbReference type="GO" id="GO:0042802">
    <property type="term" value="F:identical protein binding"/>
    <property type="evidence" value="ECO:0000314"/>
    <property type="project" value="EcoCyc"/>
</dbReference>
<dbReference type="GO" id="GO:0051252">
    <property type="term" value="P:regulation of RNA metabolic process"/>
    <property type="evidence" value="ECO:0000315"/>
    <property type="project" value="EcoCyc"/>
</dbReference>
<dbReference type="GO" id="GO:0006401">
    <property type="term" value="P:RNA catabolic process"/>
    <property type="evidence" value="ECO:0000315"/>
    <property type="project" value="EcoCyc"/>
</dbReference>
<dbReference type="CDD" id="cd01948">
    <property type="entry name" value="EAL"/>
    <property type="match status" value="1"/>
</dbReference>
<dbReference type="CDD" id="cd01949">
    <property type="entry name" value="GGDEF"/>
    <property type="match status" value="1"/>
</dbReference>
<dbReference type="FunFam" id="3.20.20.450:FF:000003">
    <property type="entry name" value="RNase E specificity factor CsrD"/>
    <property type="match status" value="1"/>
</dbReference>
<dbReference type="FunFam" id="3.30.70.270:FF:000027">
    <property type="entry name" value="RNase E specificity factor CsrD"/>
    <property type="match status" value="1"/>
</dbReference>
<dbReference type="Gene3D" id="3.30.70.270">
    <property type="match status" value="1"/>
</dbReference>
<dbReference type="Gene3D" id="3.20.20.450">
    <property type="entry name" value="EAL domain"/>
    <property type="match status" value="1"/>
</dbReference>
<dbReference type="InterPro" id="IPR050706">
    <property type="entry name" value="Cyclic-di-GMP_PDE-like"/>
</dbReference>
<dbReference type="InterPro" id="IPR001633">
    <property type="entry name" value="EAL_dom"/>
</dbReference>
<dbReference type="InterPro" id="IPR035919">
    <property type="entry name" value="EAL_sf"/>
</dbReference>
<dbReference type="InterPro" id="IPR033423">
    <property type="entry name" value="GAPES4"/>
</dbReference>
<dbReference type="InterPro" id="IPR000160">
    <property type="entry name" value="GGDEF_dom"/>
</dbReference>
<dbReference type="InterPro" id="IPR029787">
    <property type="entry name" value="Nucleotide_cyclase"/>
</dbReference>
<dbReference type="InterPro" id="IPR043128">
    <property type="entry name" value="Rev_trsase/Diguanyl_cyclase"/>
</dbReference>
<dbReference type="NCBIfam" id="TIGR00254">
    <property type="entry name" value="GGDEF"/>
    <property type="match status" value="1"/>
</dbReference>
<dbReference type="NCBIfam" id="NF008281">
    <property type="entry name" value="PRK11059.1"/>
    <property type="match status" value="1"/>
</dbReference>
<dbReference type="PANTHER" id="PTHR33121">
    <property type="entry name" value="CYCLIC DI-GMP PHOSPHODIESTERASE PDEF"/>
    <property type="match status" value="1"/>
</dbReference>
<dbReference type="PANTHER" id="PTHR33121:SF32">
    <property type="entry name" value="RNASE E SPECIFICITY FACTOR CSRD"/>
    <property type="match status" value="1"/>
</dbReference>
<dbReference type="Pfam" id="PF00563">
    <property type="entry name" value="EAL"/>
    <property type="match status" value="1"/>
</dbReference>
<dbReference type="Pfam" id="PF17157">
    <property type="entry name" value="GAPES4"/>
    <property type="match status" value="1"/>
</dbReference>
<dbReference type="Pfam" id="PF00990">
    <property type="entry name" value="GGDEF"/>
    <property type="match status" value="1"/>
</dbReference>
<dbReference type="SMART" id="SM00052">
    <property type="entry name" value="EAL"/>
    <property type="match status" value="1"/>
</dbReference>
<dbReference type="SMART" id="SM00267">
    <property type="entry name" value="GGDEF"/>
    <property type="match status" value="1"/>
</dbReference>
<dbReference type="SUPFAM" id="SSF141868">
    <property type="entry name" value="EAL domain-like"/>
    <property type="match status" value="1"/>
</dbReference>
<dbReference type="SUPFAM" id="SSF55073">
    <property type="entry name" value="Nucleotide cyclase"/>
    <property type="match status" value="1"/>
</dbReference>
<dbReference type="PROSITE" id="PS50883">
    <property type="entry name" value="EAL"/>
    <property type="match status" value="1"/>
</dbReference>
<dbReference type="PROSITE" id="PS50887">
    <property type="entry name" value="GGDEF"/>
    <property type="match status" value="1"/>
</dbReference>
<keyword id="KW-1003">Cell membrane</keyword>
<keyword id="KW-0175">Coiled coil</keyword>
<keyword id="KW-0472">Membrane</keyword>
<keyword id="KW-1185">Reference proteome</keyword>
<keyword id="KW-0812">Transmembrane</keyword>
<keyword id="KW-1133">Transmembrane helix</keyword>
<comment type="function">
    <text evidence="4 5 6">Serves as a specificity factor required for RNase E-mediated decay of the small global regulatory RNAs CsrB and CsrC, it is probably not a nuclease. Nor does its activity involve c-di-GMP, despite its domain composition. Positively modulates motility gene expression, is also required for curli expression.</text>
</comment>
<comment type="subcellular location">
    <subcellularLocation>
        <location evidence="7">Cell membrane</location>
        <topology evidence="7">Multi-pass membrane protein</topology>
    </subcellularLocation>
</comment>
<comment type="induction">
    <text evidence="6">Expressed at low levels at both 28 and 37 degrees Celsius.</text>
</comment>
<comment type="domain">
    <text evidence="4">Removal of the transmembrane regions (residues 1-156) has no effect on csrB translation, however removal of either the HAMP-like region, EAL or GGDEF domains obviates the activity of CsrD.</text>
</comment>
<comment type="disruption phenotype">
    <text evidence="4 5 6">Dramatically stabilizes CsrB and CsrC RNAs, small RNAs that sequester the global carbon storage regulator CsrA; also decreased transcription of CsrB/C (PubMed:16980588). Decreased biofilm formation, decreased expression of DgcC, a probable diguanylate cyclase and of the curli regulator CsgD. Decreased expression of the curlin subunit CsgB, decreased curli expression at 28 degrees Celsius (PubMed:19332833).</text>
</comment>
<comment type="caution">
    <text evidence="7">Although this protein contains both EAL and GGDEF domains it is unlikely to have either c-di-GMP phosphodiesterase or diguanylate cyclase activities as amino acids known to be important to these activities are not conserved.</text>
</comment>
<feature type="chain" id="PRO_0000169492" description="RNase E specificity factor CsrD">
    <location>
        <begin position="1"/>
        <end position="646"/>
    </location>
</feature>
<feature type="transmembrane region" description="Helical" evidence="1">
    <location>
        <begin position="10"/>
        <end position="30"/>
    </location>
</feature>
<feature type="transmembrane region" description="Helical" evidence="1">
    <location>
        <begin position="135"/>
        <end position="155"/>
    </location>
</feature>
<feature type="domain" description="GGDEF" evidence="3">
    <location>
        <begin position="254"/>
        <end position="387"/>
    </location>
</feature>
<feature type="domain" description="EAL" evidence="2">
    <location>
        <begin position="396"/>
        <end position="644"/>
    </location>
</feature>
<feature type="region of interest" description="HAMP-like">
    <location>
        <begin position="152"/>
        <end position="219"/>
    </location>
</feature>
<feature type="coiled-coil region" evidence="1">
    <location>
        <begin position="194"/>
        <end position="224"/>
    </location>
</feature>
<feature type="mutagenesis site" description="Decreased transcription of csrB." evidence="4">
    <original>L</original>
    <variation>A</variation>
    <location>
        <position position="584"/>
    </location>
</feature>
<name>CSRD_ECOLI</name>
<protein>
    <recommendedName>
        <fullName>RNase E specificity factor CsrD</fullName>
    </recommendedName>
    <alternativeName>
        <fullName>Regulator of CsrB and CsrC decay CsrD</fullName>
    </alternativeName>
</protein>
<sequence length="646" mass="73339">MRLTTKFSAFVTLLTGLTIFVTLLGCSLSFYNAIQYKFSHRVQAVATAIDTHLVSNDFSVLRPQITELMMSADIVRVDLLHGDKQVYTLARNGSYRPVGSSDLFRELSVPLIKHPGMSLRLVYQDPMGNYFHSLMTTAPLTGAIGFIIVMLFLAVRWLQRQLAGQELLETRATRILNGERGSNVLGTIYEWPPRTSSALDTLLREIQNAREQHSRLDTLIRSYAAQDVKTGLNNRLFFDNQLATLLEDQEKVGTHGIVMMIRLPDFNMLSDTWGHSQVEEQFFTLTNLLSTFMMRYPGALLARYHRSDFAALLPHRTLKEAESIAGQLIKAVDTLPNNKMLDRDDMIHIGICAWRSGQDTEQVMEHAESATRNAGLQGGNSWAIYDDSLPEKGRGNVRWRTLIEQMLSRGGPRLYQKPAVTREGQVHHRELMCRIFDGNEEVSSAEYMPMVLQFGLSEEYDRLQISRLIPLLRYWPEENLAIQVTVESLIRPRFQRWLRDTLMQCEKSQRKRIIIELAEADVGQHISRLQPVIRLVNALGVRVAVNQAGLTLVSTSWIKELNVELLKLHPGLVRNIEKRTENQLLVQSLVEACSGTSTQVYATGVRSRSEWQTLIQRGVTGGQGDFFASSQPLDTNVKKYSQRYSV</sequence>
<reference key="1">
    <citation type="journal article" date="1997" name="Science">
        <title>The complete genome sequence of Escherichia coli K-12.</title>
        <authorList>
            <person name="Blattner F.R."/>
            <person name="Plunkett G. III"/>
            <person name="Bloch C.A."/>
            <person name="Perna N.T."/>
            <person name="Burland V."/>
            <person name="Riley M."/>
            <person name="Collado-Vides J."/>
            <person name="Glasner J.D."/>
            <person name="Rode C.K."/>
            <person name="Mayhew G.F."/>
            <person name="Gregor J."/>
            <person name="Davis N.W."/>
            <person name="Kirkpatrick H.A."/>
            <person name="Goeden M.A."/>
            <person name="Rose D.J."/>
            <person name="Mau B."/>
            <person name="Shao Y."/>
        </authorList>
    </citation>
    <scope>NUCLEOTIDE SEQUENCE [LARGE SCALE GENOMIC DNA]</scope>
    <source>
        <strain>K12 / MG1655 / ATCC 47076</strain>
    </source>
</reference>
<reference key="2">
    <citation type="journal article" date="2006" name="Mol. Syst. Biol.">
        <title>Highly accurate genome sequences of Escherichia coli K-12 strains MG1655 and W3110.</title>
        <authorList>
            <person name="Hayashi K."/>
            <person name="Morooka N."/>
            <person name="Yamamoto Y."/>
            <person name="Fujita K."/>
            <person name="Isono K."/>
            <person name="Choi S."/>
            <person name="Ohtsubo E."/>
            <person name="Baba T."/>
            <person name="Wanner B.L."/>
            <person name="Mori H."/>
            <person name="Horiuchi T."/>
        </authorList>
    </citation>
    <scope>NUCLEOTIDE SEQUENCE [LARGE SCALE GENOMIC DNA]</scope>
    <source>
        <strain>K12 / W3110 / ATCC 27325 / DSM 5911</strain>
    </source>
</reference>
<reference key="3">
    <citation type="journal article" date="1988" name="J. Bacteriol.">
        <title>Determinations of the DNA sequence of the mreB gene and of the gene products of the mre region that function in formation of the rod shape of Escherichia coli cells.</title>
        <authorList>
            <person name="Doi M."/>
            <person name="Wachi M."/>
            <person name="Ishino F."/>
            <person name="Tomioka S."/>
            <person name="Ito M."/>
            <person name="Sakagami Y."/>
            <person name="Suzuki A."/>
            <person name="Matsuhashi M."/>
        </authorList>
    </citation>
    <scope>NUCLEOTIDE SEQUENCE [GENOMIC DNA] OF 545-646</scope>
    <source>
        <strain>K12</strain>
    </source>
</reference>
<reference key="4">
    <citation type="journal article" date="2006" name="FEMS Microbiol. Lett.">
        <title>Identification of YhdA as a regulator of the Escherichia coli carbon storage regulation system.</title>
        <authorList>
            <person name="Jonas K."/>
            <person name="Tomenius H."/>
            <person name="Romling U."/>
            <person name="Georgellis D."/>
            <person name="Melefors O."/>
        </authorList>
    </citation>
    <scope>FUNCTION IN REGULATION OF CARBON STORAGE REGULATION SYSTEM</scope>
    <scope>DISRUPTION PHENOTYPE</scope>
    <source>
        <strain>K12 / MG1655 / CF7789</strain>
    </source>
</reference>
<reference key="5">
    <citation type="journal article" date="2006" name="Genes Dev.">
        <title>Identification of a novel regulatory protein (CsrD) that targets the global regulatory RNAs CsrB and CsrC for degradation by RNase E.</title>
        <authorList>
            <person name="Suzuki K."/>
            <person name="Babitzke P."/>
            <person name="Kushner S.R."/>
            <person name="Romeo T."/>
        </authorList>
    </citation>
    <scope>FUNCTION</scope>
    <scope>MUTAGENESIS OF LEU-584</scope>
    <scope>DOMAIN EAL AND GGDEF</scope>
    <scope>DISRUPTION PHENOTYPE</scope>
    <source>
        <strain>K12 / MG1655 / CF7789</strain>
    </source>
</reference>
<reference key="6">
    <citation type="journal article" date="2009" name="Microbiology">
        <title>Gene expression patterns and differential input into curli fimbriae regulation of all GGDEF/EAL domain proteins in Escherichia coli.</title>
        <authorList>
            <person name="Sommerfeldt N."/>
            <person name="Possling A."/>
            <person name="Becker G."/>
            <person name="Pesavento C."/>
            <person name="Tschowri N."/>
            <person name="Hengge R."/>
        </authorList>
    </citation>
    <scope>FUNCTION IN CURLI EXPRESSION</scope>
    <scope>INDUCTION</scope>
    <scope>DISRUPTION PHENOTYPE</scope>
    <source>
        <strain>K12 / W3110 / ATCC 27325 / DSM 5911</strain>
    </source>
</reference>
<evidence type="ECO:0000255" key="1"/>
<evidence type="ECO:0000255" key="2">
    <source>
        <dbReference type="PROSITE-ProRule" id="PRU00074"/>
    </source>
</evidence>
<evidence type="ECO:0000255" key="3">
    <source>
        <dbReference type="PROSITE-ProRule" id="PRU00095"/>
    </source>
</evidence>
<evidence type="ECO:0000269" key="4">
    <source>
    </source>
</evidence>
<evidence type="ECO:0000269" key="5">
    <source>
    </source>
</evidence>
<evidence type="ECO:0000269" key="6">
    <source>
    </source>
</evidence>
<evidence type="ECO:0000305" key="7"/>
<gene>
    <name type="primary">csrD</name>
    <name type="synonym">yhdA</name>
    <name type="ordered locus">b3252</name>
    <name type="ordered locus">JW3221</name>
</gene>
<proteinExistence type="evidence at protein level"/>